<name>CP2C4_RABIT</name>
<accession>P11371</accession>
<gene>
    <name type="primary">CYP2C4</name>
</gene>
<feature type="chain" id="PRO_0000051695" description="Cytochrome P450 2C4">
    <location>
        <begin position="1"/>
        <end position="487"/>
    </location>
</feature>
<feature type="binding site" description="axial binding residue">
    <location>
        <position position="432"/>
    </location>
    <ligand>
        <name>heme</name>
        <dbReference type="ChEBI" id="CHEBI:30413"/>
    </ligand>
    <ligandPart>
        <name>Fe</name>
        <dbReference type="ChEBI" id="CHEBI:18248"/>
    </ligandPart>
</feature>
<sequence length="487" mass="55387">MDPVAGLVLGLCCLLLLSLWKQNSGRGKLPPGPTPFPIIGNILQIDVKDISKSLTKFSERYGPVFTVYLGMKPTVVLHGYKAVKEALVDLGEEFAGRGHFPIAEKVNKGLGIVFTNANTWKEMRRFSLMTLRNFGMGKRSIEDRVQEEARCLVEELRKTNALPCDPTFILGCAPCNVICSVILHNRFDYKDEEFLKLMERLNENIRILSSPWLQVYNNFPALLDYFPGIHKTLLKNADYTKNFIMEKVKEHQKLLDVNNPRDFIDCFLIKMEKENNLEFTLGSLVIAVFDLFGAGTETTSTTLRYSLLLLLKHPEVAARVQEEIERVIGRHRSPCMQDRSHMPYTDAVIHEIQRFIDLLPTNLPHAVTRDVKFRNYFIPKGTDIITSLTSVLHDEKAFPNPKVFDPGHFLDESGNFKKSDYFMPFSAGKRMCVGEGLARMELFLFLTSILQNFKLQSLVEPKDLDITAVVNGFVSVPPSYQLCFIPI</sequence>
<protein>
    <recommendedName>
        <fullName>Cytochrome P450 2C4</fullName>
        <ecNumber>1.14.14.1</ecNumber>
    </recommendedName>
    <alternativeName>
        <fullName>CYPIIC4</fullName>
    </alternativeName>
    <alternativeName>
        <fullName>Cytochrome P450 PBc4</fullName>
    </alternativeName>
    <alternativeName>
        <fullName>P1-88</fullName>
    </alternativeName>
    <alternativeName>
        <fullName>Progesterone 21-hydroxylase</fullName>
    </alternativeName>
</protein>
<reference key="1">
    <citation type="journal article" date="1987" name="J. Biol. Chem.">
        <title>Characterization of a second gene product related to rabbit cytochrome P-450 1.</title>
        <authorList>
            <person name="Johnson E.F."/>
            <person name="Barnes H.J."/>
            <person name="Griffin K.J."/>
            <person name="Okino S."/>
            <person name="Tukey R.H."/>
        </authorList>
    </citation>
    <scope>NUCLEOTIDE SEQUENCE [MRNA]</scope>
    <source>
        <tissue>Liver</tissue>
    </source>
</reference>
<reference key="2">
    <citation type="journal article" date="1990" name="DNA Cell Biol.">
        <title>Structure of 5' regions and expression of phenobarbital-inducible rabbit cytochrome P450IIC genes.</title>
        <authorList>
            <person name="Zhao J."/>
            <person name="Chan G."/>
            <person name="Govind S."/>
            <person name="Bell P."/>
            <person name="Kemper B.W."/>
        </authorList>
    </citation>
    <scope>NUCLEOTIDE SEQUENCE [GENOMIC DNA] OF 1-10</scope>
</reference>
<comment type="function">
    <text>Cytochromes P450 are a group of heme-thiolate monooxygenases. In liver microsomes, this enzyme is involved in an NADPH-dependent electron transport pathway. It oxidizes a variety of structurally unrelated compounds, including steroids, fatty acids, and xenobiotics.</text>
</comment>
<comment type="catalytic activity">
    <reaction>
        <text>an organic molecule + reduced [NADPH--hemoprotein reductase] + O2 = an alcohol + oxidized [NADPH--hemoprotein reductase] + H2O + H(+)</text>
        <dbReference type="Rhea" id="RHEA:17149"/>
        <dbReference type="Rhea" id="RHEA-COMP:11964"/>
        <dbReference type="Rhea" id="RHEA-COMP:11965"/>
        <dbReference type="ChEBI" id="CHEBI:15377"/>
        <dbReference type="ChEBI" id="CHEBI:15378"/>
        <dbReference type="ChEBI" id="CHEBI:15379"/>
        <dbReference type="ChEBI" id="CHEBI:30879"/>
        <dbReference type="ChEBI" id="CHEBI:57618"/>
        <dbReference type="ChEBI" id="CHEBI:58210"/>
        <dbReference type="ChEBI" id="CHEBI:142491"/>
        <dbReference type="EC" id="1.14.14.1"/>
    </reaction>
</comment>
<comment type="cofactor">
    <cofactor evidence="1">
        <name>heme</name>
        <dbReference type="ChEBI" id="CHEBI:30413"/>
    </cofactor>
</comment>
<comment type="subcellular location">
    <subcellularLocation>
        <location evidence="1">Endoplasmic reticulum membrane</location>
    </subcellularLocation>
    <subcellularLocation>
        <location evidence="1">Microsome membrane</location>
    </subcellularLocation>
</comment>
<comment type="induction">
    <text>P450 can be induced to high levels in liver and other tissues by various foreign compounds, including drugs, pesticides, and carcinogens.</text>
</comment>
<comment type="miscellaneous">
    <text>This protein differs from other forms of cytochrome P450 in that it catalyzes the 21-hydroxylation of progesterone, resulting in the formation of deoxycorticosterone.</text>
</comment>
<comment type="similarity">
    <text evidence="2">Belongs to the cytochrome P450 family.</text>
</comment>
<evidence type="ECO:0000250" key="1"/>
<evidence type="ECO:0000305" key="2"/>
<dbReference type="EC" id="1.14.14.1"/>
<dbReference type="EMBL" id="J02716">
    <property type="protein sequence ID" value="AAA31216.1"/>
    <property type="molecule type" value="mRNA"/>
</dbReference>
<dbReference type="EMBL" id="M74200">
    <property type="status" value="NOT_ANNOTATED_CDS"/>
    <property type="molecule type" value="Genomic_DNA"/>
</dbReference>
<dbReference type="PIR" id="A26731">
    <property type="entry name" value="A26731"/>
</dbReference>
<dbReference type="RefSeq" id="NP_001177360.1">
    <property type="nucleotide sequence ID" value="NM_001190431.1"/>
</dbReference>
<dbReference type="SMR" id="P11371"/>
<dbReference type="STRING" id="9986.ENSOCUP00000019521"/>
<dbReference type="PaxDb" id="9986-ENSOCUP00000019521"/>
<dbReference type="GeneID" id="100349436"/>
<dbReference type="KEGG" id="ocu:100349436"/>
<dbReference type="CTD" id="100349436"/>
<dbReference type="eggNOG" id="KOG0156">
    <property type="taxonomic scope" value="Eukaryota"/>
</dbReference>
<dbReference type="InParanoid" id="P11371"/>
<dbReference type="OrthoDB" id="1103324at2759"/>
<dbReference type="Proteomes" id="UP000001811">
    <property type="component" value="Unplaced"/>
</dbReference>
<dbReference type="GO" id="GO:0005789">
    <property type="term" value="C:endoplasmic reticulum membrane"/>
    <property type="evidence" value="ECO:0007669"/>
    <property type="project" value="UniProtKB-SubCell"/>
</dbReference>
<dbReference type="GO" id="GO:0020037">
    <property type="term" value="F:heme binding"/>
    <property type="evidence" value="ECO:0007669"/>
    <property type="project" value="InterPro"/>
</dbReference>
<dbReference type="GO" id="GO:0005506">
    <property type="term" value="F:iron ion binding"/>
    <property type="evidence" value="ECO:0007669"/>
    <property type="project" value="InterPro"/>
</dbReference>
<dbReference type="GO" id="GO:0016712">
    <property type="term" value="F:oxidoreductase activity, acting on paired donors, with incorporation or reduction of molecular oxygen, reduced flavin or flavoprotein as one donor, and incorporation of one atom of oxygen"/>
    <property type="evidence" value="ECO:0007669"/>
    <property type="project" value="UniProtKB-EC"/>
</dbReference>
<dbReference type="GO" id="GO:0006082">
    <property type="term" value="P:organic acid metabolic process"/>
    <property type="evidence" value="ECO:0007669"/>
    <property type="project" value="TreeGrafter"/>
</dbReference>
<dbReference type="GO" id="GO:0006805">
    <property type="term" value="P:xenobiotic metabolic process"/>
    <property type="evidence" value="ECO:0007669"/>
    <property type="project" value="TreeGrafter"/>
</dbReference>
<dbReference type="CDD" id="cd20665">
    <property type="entry name" value="CYP2C-like"/>
    <property type="match status" value="1"/>
</dbReference>
<dbReference type="FunFam" id="1.10.630.10:FF:000299">
    <property type="entry name" value="Cytochrome P450 2C9"/>
    <property type="match status" value="1"/>
</dbReference>
<dbReference type="Gene3D" id="1.10.630.10">
    <property type="entry name" value="Cytochrome P450"/>
    <property type="match status" value="1"/>
</dbReference>
<dbReference type="InterPro" id="IPR001128">
    <property type="entry name" value="Cyt_P450"/>
</dbReference>
<dbReference type="InterPro" id="IPR017972">
    <property type="entry name" value="Cyt_P450_CS"/>
</dbReference>
<dbReference type="InterPro" id="IPR002401">
    <property type="entry name" value="Cyt_P450_E_grp-I"/>
</dbReference>
<dbReference type="InterPro" id="IPR036396">
    <property type="entry name" value="Cyt_P450_sf"/>
</dbReference>
<dbReference type="InterPro" id="IPR050182">
    <property type="entry name" value="Cytochrome_P450_fam2"/>
</dbReference>
<dbReference type="PANTHER" id="PTHR24300:SF400">
    <property type="entry name" value="CYTOCHROME P450 2C9"/>
    <property type="match status" value="1"/>
</dbReference>
<dbReference type="PANTHER" id="PTHR24300">
    <property type="entry name" value="CYTOCHROME P450 508A4-RELATED"/>
    <property type="match status" value="1"/>
</dbReference>
<dbReference type="Pfam" id="PF00067">
    <property type="entry name" value="p450"/>
    <property type="match status" value="1"/>
</dbReference>
<dbReference type="PRINTS" id="PR00463">
    <property type="entry name" value="EP450I"/>
</dbReference>
<dbReference type="PRINTS" id="PR00385">
    <property type="entry name" value="P450"/>
</dbReference>
<dbReference type="SUPFAM" id="SSF48264">
    <property type="entry name" value="Cytochrome P450"/>
    <property type="match status" value="1"/>
</dbReference>
<dbReference type="PROSITE" id="PS00086">
    <property type="entry name" value="CYTOCHROME_P450"/>
    <property type="match status" value="1"/>
</dbReference>
<proteinExistence type="evidence at transcript level"/>
<keyword id="KW-0256">Endoplasmic reticulum</keyword>
<keyword id="KW-0349">Heme</keyword>
<keyword id="KW-0408">Iron</keyword>
<keyword id="KW-0472">Membrane</keyword>
<keyword id="KW-0479">Metal-binding</keyword>
<keyword id="KW-0492">Microsome</keyword>
<keyword id="KW-0503">Monooxygenase</keyword>
<keyword id="KW-0560">Oxidoreductase</keyword>
<keyword id="KW-1185">Reference proteome</keyword>
<organism>
    <name type="scientific">Oryctolagus cuniculus</name>
    <name type="common">Rabbit</name>
    <dbReference type="NCBI Taxonomy" id="9986"/>
    <lineage>
        <taxon>Eukaryota</taxon>
        <taxon>Metazoa</taxon>
        <taxon>Chordata</taxon>
        <taxon>Craniata</taxon>
        <taxon>Vertebrata</taxon>
        <taxon>Euteleostomi</taxon>
        <taxon>Mammalia</taxon>
        <taxon>Eutheria</taxon>
        <taxon>Euarchontoglires</taxon>
        <taxon>Glires</taxon>
        <taxon>Lagomorpha</taxon>
        <taxon>Leporidae</taxon>
        <taxon>Oryctolagus</taxon>
    </lineage>
</organism>